<keyword id="KW-0007">Acetylation</keyword>
<keyword id="KW-0067">ATP-binding</keyword>
<keyword id="KW-0436">Ligase</keyword>
<keyword id="KW-0460">Magnesium</keyword>
<keyword id="KW-0479">Metal-binding</keyword>
<keyword id="KW-0547">Nucleotide-binding</keyword>
<comment type="function">
    <text evidence="1">Catalyzes the conversion of acetate into acetyl-CoA (AcCoA), an essential intermediate at the junction of anabolic and catabolic pathways. AcsA undergoes a two-step reaction. In the first half reaction, AcsA combines acetate with ATP to form acetyl-adenylate (AcAMP) intermediate. In the second half reaction, it can then transfer the acetyl group from AcAMP to the sulfhydryl group of CoA, forming the product AcCoA.</text>
</comment>
<comment type="catalytic activity">
    <reaction evidence="1">
        <text>acetate + ATP + CoA = acetyl-CoA + AMP + diphosphate</text>
        <dbReference type="Rhea" id="RHEA:23176"/>
        <dbReference type="ChEBI" id="CHEBI:30089"/>
        <dbReference type="ChEBI" id="CHEBI:30616"/>
        <dbReference type="ChEBI" id="CHEBI:33019"/>
        <dbReference type="ChEBI" id="CHEBI:57287"/>
        <dbReference type="ChEBI" id="CHEBI:57288"/>
        <dbReference type="ChEBI" id="CHEBI:456215"/>
        <dbReference type="EC" id="6.2.1.1"/>
    </reaction>
</comment>
<comment type="cofactor">
    <cofactor evidence="1">
        <name>Mg(2+)</name>
        <dbReference type="ChEBI" id="CHEBI:18420"/>
    </cofactor>
</comment>
<comment type="PTM">
    <text evidence="1">Acetylated. Deacetylation by the SIR2-homolog deacetylase activates the enzyme.</text>
</comment>
<comment type="similarity">
    <text evidence="1">Belongs to the ATP-dependent AMP-binding enzyme family.</text>
</comment>
<protein>
    <recommendedName>
        <fullName evidence="1">Acetyl-coenzyme A synthetase</fullName>
        <shortName evidence="1">AcCoA synthetase</shortName>
        <shortName evidence="1">Acs</shortName>
        <ecNumber evidence="1">6.2.1.1</ecNumber>
    </recommendedName>
    <alternativeName>
        <fullName evidence="1">Acetate--CoA ligase</fullName>
    </alternativeName>
    <alternativeName>
        <fullName evidence="1">Acyl-activating enzyme</fullName>
    </alternativeName>
</protein>
<accession>B0S8X7</accession>
<gene>
    <name evidence="1" type="primary">acsA</name>
    <name type="ordered locus">LBF_3332</name>
</gene>
<reference key="1">
    <citation type="journal article" date="2008" name="PLoS ONE">
        <title>Genome sequence of the saprophyte Leptospira biflexa provides insights into the evolution of Leptospira and the pathogenesis of leptospirosis.</title>
        <authorList>
            <person name="Picardeau M."/>
            <person name="Bulach D.M."/>
            <person name="Bouchier C."/>
            <person name="Zuerner R.L."/>
            <person name="Zidane N."/>
            <person name="Wilson P.J."/>
            <person name="Creno S."/>
            <person name="Kuczek E.S."/>
            <person name="Bommezzadri S."/>
            <person name="Davis J.C."/>
            <person name="McGrath A."/>
            <person name="Johnson M.J."/>
            <person name="Boursaux-Eude C."/>
            <person name="Seemann T."/>
            <person name="Rouy Z."/>
            <person name="Coppel R.L."/>
            <person name="Rood J.I."/>
            <person name="Lajus A."/>
            <person name="Davies J.K."/>
            <person name="Medigue C."/>
            <person name="Adler B."/>
        </authorList>
    </citation>
    <scope>NUCLEOTIDE SEQUENCE [LARGE SCALE GENOMIC DNA]</scope>
    <source>
        <strain>Patoc 1 / Ames</strain>
    </source>
</reference>
<sequence length="654" mass="73318">MPKERIVAPSKEFAKLANVSLKEYKSKYKESIEKPEKFWAEQAKRLTWFKKWTKVLRHDFAKAKVEWFVGGKLNVSYNCLDRHLDSPLKNKAALIWEGDNPDESKVLTYHDLHREVNHFANVLKKFKVKKGDRVLIYLPMVPELAIATLACTRIGAVHSVVFGGFSPEALLGRIEDCKPTLVITADGGYRGGKPIELKKNVDAALAETKFKVNDVIVVKRTGDEGNLNWKEGRDHWYHYLMKDPEVKKECPAVPMESEDPLFILYTSGSTGKPKGVLHTTAGYLLGANLTFATIFDYKDTDTYWCTADIGWITGHSYILYGPLSNGATSLMFEGVPSYPDMGRFWDVIDKYKVTVFYTAPTAIRALMREGLEHIKKRSLASLRLLGSVGEPINPEAWEWYYANIGKSKCPIVDTWWQTETGSIMISGIPGAIPQKPGSASWPFYGIQPVLVDNEGVELKGKGEISGNLCIAKPWPSMMRGVYGDPKRFFDTYFSQFKGYYFTGDGANRDKEGYFRITGRVDDVLNVSGHRIGSAEVESALVEHKSVAEAAVVGFPHDIKGQGIYAYVTVKQGVVTNDLLKKELIAMVEKVIGKIARPDVIHWAPGLPKTRSGKIMRRILRKIANNEFDTLGDISTLADPSVVQSLIDDKKKYHS</sequence>
<organism>
    <name type="scientific">Leptospira biflexa serovar Patoc (strain Patoc 1 / Ames)</name>
    <dbReference type="NCBI Taxonomy" id="355278"/>
    <lineage>
        <taxon>Bacteria</taxon>
        <taxon>Pseudomonadati</taxon>
        <taxon>Spirochaetota</taxon>
        <taxon>Spirochaetia</taxon>
        <taxon>Leptospirales</taxon>
        <taxon>Leptospiraceae</taxon>
        <taxon>Leptospira</taxon>
    </lineage>
</organism>
<feature type="chain" id="PRO_1000213622" description="Acetyl-coenzyme A synthetase">
    <location>
        <begin position="1"/>
        <end position="654"/>
    </location>
</feature>
<feature type="binding site" evidence="1">
    <location>
        <begin position="190"/>
        <end position="193"/>
    </location>
    <ligand>
        <name>CoA</name>
        <dbReference type="ChEBI" id="CHEBI:57287"/>
    </ligand>
</feature>
<feature type="binding site" evidence="1">
    <location>
        <position position="313"/>
    </location>
    <ligand>
        <name>CoA</name>
        <dbReference type="ChEBI" id="CHEBI:57287"/>
    </ligand>
</feature>
<feature type="binding site" evidence="1">
    <location>
        <begin position="389"/>
        <end position="391"/>
    </location>
    <ligand>
        <name>ATP</name>
        <dbReference type="ChEBI" id="CHEBI:30616"/>
    </ligand>
</feature>
<feature type="binding site" evidence="1">
    <location>
        <begin position="413"/>
        <end position="418"/>
    </location>
    <ligand>
        <name>ATP</name>
        <dbReference type="ChEBI" id="CHEBI:30616"/>
    </ligand>
</feature>
<feature type="binding site" evidence="1">
    <location>
        <position position="504"/>
    </location>
    <ligand>
        <name>ATP</name>
        <dbReference type="ChEBI" id="CHEBI:30616"/>
    </ligand>
</feature>
<feature type="binding site" evidence="1">
    <location>
        <position position="519"/>
    </location>
    <ligand>
        <name>ATP</name>
        <dbReference type="ChEBI" id="CHEBI:30616"/>
    </ligand>
</feature>
<feature type="binding site" evidence="1">
    <location>
        <position position="527"/>
    </location>
    <ligand>
        <name>CoA</name>
        <dbReference type="ChEBI" id="CHEBI:57287"/>
    </ligand>
</feature>
<feature type="binding site" evidence="1">
    <location>
        <position position="530"/>
    </location>
    <ligand>
        <name>ATP</name>
        <dbReference type="ChEBI" id="CHEBI:30616"/>
    </ligand>
</feature>
<feature type="binding site" evidence="1">
    <location>
        <position position="541"/>
    </location>
    <ligand>
        <name>Mg(2+)</name>
        <dbReference type="ChEBI" id="CHEBI:18420"/>
    </ligand>
</feature>
<feature type="binding site" evidence="1">
    <location>
        <position position="543"/>
    </location>
    <ligand>
        <name>Mg(2+)</name>
        <dbReference type="ChEBI" id="CHEBI:18420"/>
    </ligand>
</feature>
<feature type="binding site" evidence="1">
    <location>
        <position position="546"/>
    </location>
    <ligand>
        <name>Mg(2+)</name>
        <dbReference type="ChEBI" id="CHEBI:18420"/>
    </ligand>
</feature>
<feature type="modified residue" description="N6-acetyllysine" evidence="1">
    <location>
        <position position="613"/>
    </location>
</feature>
<proteinExistence type="inferred from homology"/>
<name>ACSA_LEPBA</name>
<dbReference type="EC" id="6.2.1.1" evidence="1"/>
<dbReference type="EMBL" id="CP000777">
    <property type="protein sequence ID" value="ABZ95798.1"/>
    <property type="molecule type" value="Genomic_DNA"/>
</dbReference>
<dbReference type="RefSeq" id="WP_012390366.1">
    <property type="nucleotide sequence ID" value="NC_010842.1"/>
</dbReference>
<dbReference type="SMR" id="B0S8X7"/>
<dbReference type="KEGG" id="lbf:LBF_3332"/>
<dbReference type="HOGENOM" id="CLU_000022_3_6_12"/>
<dbReference type="GO" id="GO:0005829">
    <property type="term" value="C:cytosol"/>
    <property type="evidence" value="ECO:0007669"/>
    <property type="project" value="TreeGrafter"/>
</dbReference>
<dbReference type="GO" id="GO:0003987">
    <property type="term" value="F:acetate-CoA ligase activity"/>
    <property type="evidence" value="ECO:0007669"/>
    <property type="project" value="UniProtKB-UniRule"/>
</dbReference>
<dbReference type="GO" id="GO:0016208">
    <property type="term" value="F:AMP binding"/>
    <property type="evidence" value="ECO:0007669"/>
    <property type="project" value="InterPro"/>
</dbReference>
<dbReference type="GO" id="GO:0005524">
    <property type="term" value="F:ATP binding"/>
    <property type="evidence" value="ECO:0007669"/>
    <property type="project" value="UniProtKB-KW"/>
</dbReference>
<dbReference type="GO" id="GO:0046872">
    <property type="term" value="F:metal ion binding"/>
    <property type="evidence" value="ECO:0007669"/>
    <property type="project" value="UniProtKB-KW"/>
</dbReference>
<dbReference type="GO" id="GO:0019427">
    <property type="term" value="P:acetyl-CoA biosynthetic process from acetate"/>
    <property type="evidence" value="ECO:0007669"/>
    <property type="project" value="InterPro"/>
</dbReference>
<dbReference type="CDD" id="cd05966">
    <property type="entry name" value="ACS"/>
    <property type="match status" value="1"/>
</dbReference>
<dbReference type="FunFam" id="3.30.300.30:FF:000004">
    <property type="entry name" value="Acetyl-coenzyme A synthetase"/>
    <property type="match status" value="1"/>
</dbReference>
<dbReference type="FunFam" id="3.40.50.12780:FF:000001">
    <property type="entry name" value="Acetyl-coenzyme A synthetase"/>
    <property type="match status" value="1"/>
</dbReference>
<dbReference type="Gene3D" id="3.30.300.30">
    <property type="match status" value="1"/>
</dbReference>
<dbReference type="Gene3D" id="3.40.50.12780">
    <property type="entry name" value="N-terminal domain of ligase-like"/>
    <property type="match status" value="1"/>
</dbReference>
<dbReference type="HAMAP" id="MF_01123">
    <property type="entry name" value="Ac_CoA_synth"/>
    <property type="match status" value="1"/>
</dbReference>
<dbReference type="InterPro" id="IPR011904">
    <property type="entry name" value="Ac_CoA_lig"/>
</dbReference>
<dbReference type="InterPro" id="IPR032387">
    <property type="entry name" value="ACAS_N"/>
</dbReference>
<dbReference type="InterPro" id="IPR025110">
    <property type="entry name" value="AMP-bd_C"/>
</dbReference>
<dbReference type="InterPro" id="IPR045851">
    <property type="entry name" value="AMP-bd_C_sf"/>
</dbReference>
<dbReference type="InterPro" id="IPR020845">
    <property type="entry name" value="AMP-binding_CS"/>
</dbReference>
<dbReference type="InterPro" id="IPR000873">
    <property type="entry name" value="AMP-dep_synth/lig_dom"/>
</dbReference>
<dbReference type="InterPro" id="IPR042099">
    <property type="entry name" value="ANL_N_sf"/>
</dbReference>
<dbReference type="NCBIfam" id="TIGR02188">
    <property type="entry name" value="Ac_CoA_lig_AcsA"/>
    <property type="match status" value="1"/>
</dbReference>
<dbReference type="NCBIfam" id="NF001208">
    <property type="entry name" value="PRK00174.1"/>
    <property type="match status" value="1"/>
</dbReference>
<dbReference type="PANTHER" id="PTHR24095">
    <property type="entry name" value="ACETYL-COENZYME A SYNTHETASE"/>
    <property type="match status" value="1"/>
</dbReference>
<dbReference type="PANTHER" id="PTHR24095:SF14">
    <property type="entry name" value="ACETYL-COENZYME A SYNTHETASE 1"/>
    <property type="match status" value="1"/>
</dbReference>
<dbReference type="Pfam" id="PF16177">
    <property type="entry name" value="ACAS_N"/>
    <property type="match status" value="1"/>
</dbReference>
<dbReference type="Pfam" id="PF00501">
    <property type="entry name" value="AMP-binding"/>
    <property type="match status" value="1"/>
</dbReference>
<dbReference type="Pfam" id="PF13193">
    <property type="entry name" value="AMP-binding_C"/>
    <property type="match status" value="1"/>
</dbReference>
<dbReference type="SUPFAM" id="SSF56801">
    <property type="entry name" value="Acetyl-CoA synthetase-like"/>
    <property type="match status" value="1"/>
</dbReference>
<dbReference type="PROSITE" id="PS00455">
    <property type="entry name" value="AMP_BINDING"/>
    <property type="match status" value="1"/>
</dbReference>
<evidence type="ECO:0000255" key="1">
    <source>
        <dbReference type="HAMAP-Rule" id="MF_01123"/>
    </source>
</evidence>